<feature type="chain" id="PRO_1000200927" description="Carnitine operon protein CaiE">
    <location>
        <begin position="1"/>
        <end position="196"/>
    </location>
</feature>
<feature type="region of interest" description="Disordered" evidence="2">
    <location>
        <begin position="173"/>
        <end position="196"/>
    </location>
</feature>
<feature type="compositionally biased region" description="Polar residues" evidence="2">
    <location>
        <begin position="187"/>
        <end position="196"/>
    </location>
</feature>
<accession>B7NHD9</accession>
<comment type="function">
    <text evidence="1">Overproduction of CaiE stimulates the activity of CaiB and CaiD.</text>
</comment>
<comment type="pathway">
    <text evidence="1">Amine and polyamine metabolism; carnitine metabolism.</text>
</comment>
<comment type="similarity">
    <text evidence="1">Belongs to the transferase hexapeptide repeat family.</text>
</comment>
<organism>
    <name type="scientific">Escherichia coli O7:K1 (strain IAI39 / ExPEC)</name>
    <dbReference type="NCBI Taxonomy" id="585057"/>
    <lineage>
        <taxon>Bacteria</taxon>
        <taxon>Pseudomonadati</taxon>
        <taxon>Pseudomonadota</taxon>
        <taxon>Gammaproteobacteria</taxon>
        <taxon>Enterobacterales</taxon>
        <taxon>Enterobacteriaceae</taxon>
        <taxon>Escherichia</taxon>
    </lineage>
</organism>
<reference key="1">
    <citation type="journal article" date="2009" name="PLoS Genet.">
        <title>Organised genome dynamics in the Escherichia coli species results in highly diverse adaptive paths.</title>
        <authorList>
            <person name="Touchon M."/>
            <person name="Hoede C."/>
            <person name="Tenaillon O."/>
            <person name="Barbe V."/>
            <person name="Baeriswyl S."/>
            <person name="Bidet P."/>
            <person name="Bingen E."/>
            <person name="Bonacorsi S."/>
            <person name="Bouchier C."/>
            <person name="Bouvet O."/>
            <person name="Calteau A."/>
            <person name="Chiapello H."/>
            <person name="Clermont O."/>
            <person name="Cruveiller S."/>
            <person name="Danchin A."/>
            <person name="Diard M."/>
            <person name="Dossat C."/>
            <person name="Karoui M.E."/>
            <person name="Frapy E."/>
            <person name="Garry L."/>
            <person name="Ghigo J.M."/>
            <person name="Gilles A.M."/>
            <person name="Johnson J."/>
            <person name="Le Bouguenec C."/>
            <person name="Lescat M."/>
            <person name="Mangenot S."/>
            <person name="Martinez-Jehanne V."/>
            <person name="Matic I."/>
            <person name="Nassif X."/>
            <person name="Oztas S."/>
            <person name="Petit M.A."/>
            <person name="Pichon C."/>
            <person name="Rouy Z."/>
            <person name="Ruf C.S."/>
            <person name="Schneider D."/>
            <person name="Tourret J."/>
            <person name="Vacherie B."/>
            <person name="Vallenet D."/>
            <person name="Medigue C."/>
            <person name="Rocha E.P.C."/>
            <person name="Denamur E."/>
        </authorList>
    </citation>
    <scope>NUCLEOTIDE SEQUENCE [LARGE SCALE GENOMIC DNA]</scope>
    <source>
        <strain>IAI39 / ExPEC</strain>
    </source>
</reference>
<evidence type="ECO:0000255" key="1">
    <source>
        <dbReference type="HAMAP-Rule" id="MF_01525"/>
    </source>
</evidence>
<evidence type="ECO:0000256" key="2">
    <source>
        <dbReference type="SAM" id="MobiDB-lite"/>
    </source>
</evidence>
<sequence>MSYYAFEGLIPVVHPTAFVHPSAVLIGDVIVGAGVYIGPLASLRGDYGRLIVQAGANIQDGCIMHGYCDTDTIVGENGHIGHGAILHGCVIGRDALVGMNSVIMDGAVIGEESIVAAISFVKAGFRGEKRQLLMGTPARAVRNVSDDELHWKRLNTKEYQDLVGRCHASLHETQPLRQMEENRPRLQGTTDVTPKR</sequence>
<dbReference type="EMBL" id="CU928164">
    <property type="protein sequence ID" value="CAR16177.1"/>
    <property type="molecule type" value="Genomic_DNA"/>
</dbReference>
<dbReference type="RefSeq" id="WP_000122874.1">
    <property type="nucleotide sequence ID" value="NC_011750.1"/>
</dbReference>
<dbReference type="RefSeq" id="YP_002406084.1">
    <property type="nucleotide sequence ID" value="NC_011750.1"/>
</dbReference>
<dbReference type="SMR" id="B7NHD9"/>
<dbReference type="STRING" id="585057.ECIAI39_0036"/>
<dbReference type="KEGG" id="ect:ECIAI39_0036"/>
<dbReference type="PATRIC" id="fig|585057.6.peg.38"/>
<dbReference type="HOGENOM" id="CLU_064827_4_2_6"/>
<dbReference type="UniPathway" id="UPA00117"/>
<dbReference type="Proteomes" id="UP000000749">
    <property type="component" value="Chromosome"/>
</dbReference>
<dbReference type="GO" id="GO:0016740">
    <property type="term" value="F:transferase activity"/>
    <property type="evidence" value="ECO:0007669"/>
    <property type="project" value="UniProtKB-KW"/>
</dbReference>
<dbReference type="GO" id="GO:0009437">
    <property type="term" value="P:carnitine metabolic process"/>
    <property type="evidence" value="ECO:0007669"/>
    <property type="project" value="UniProtKB-UniRule"/>
</dbReference>
<dbReference type="CDD" id="cd04745">
    <property type="entry name" value="LbH_paaY_like"/>
    <property type="match status" value="1"/>
</dbReference>
<dbReference type="FunFam" id="2.160.10.10:FF:000012">
    <property type="entry name" value="Carnitine operon protein CaiE"/>
    <property type="match status" value="1"/>
</dbReference>
<dbReference type="Gene3D" id="2.160.10.10">
    <property type="entry name" value="Hexapeptide repeat proteins"/>
    <property type="match status" value="1"/>
</dbReference>
<dbReference type="HAMAP" id="MF_01525">
    <property type="entry name" value="CaiE"/>
    <property type="match status" value="1"/>
</dbReference>
<dbReference type="InterPro" id="IPR023446">
    <property type="entry name" value="CaiE"/>
</dbReference>
<dbReference type="InterPro" id="IPR001451">
    <property type="entry name" value="Hexapep"/>
</dbReference>
<dbReference type="InterPro" id="IPR050484">
    <property type="entry name" value="Transf_Hexapept/Carb_Anhydrase"/>
</dbReference>
<dbReference type="InterPro" id="IPR011004">
    <property type="entry name" value="Trimer_LpxA-like_sf"/>
</dbReference>
<dbReference type="NCBIfam" id="NF010150">
    <property type="entry name" value="PRK13627.1"/>
    <property type="match status" value="1"/>
</dbReference>
<dbReference type="PANTHER" id="PTHR13061">
    <property type="entry name" value="DYNACTIN SUBUNIT P25"/>
    <property type="match status" value="1"/>
</dbReference>
<dbReference type="PANTHER" id="PTHR13061:SF29">
    <property type="entry name" value="GAMMA CARBONIC ANHYDRASE-LIKE 1, MITOCHONDRIAL-RELATED"/>
    <property type="match status" value="1"/>
</dbReference>
<dbReference type="Pfam" id="PF00132">
    <property type="entry name" value="Hexapep"/>
    <property type="match status" value="1"/>
</dbReference>
<dbReference type="SUPFAM" id="SSF51161">
    <property type="entry name" value="Trimeric LpxA-like enzymes"/>
    <property type="match status" value="1"/>
</dbReference>
<gene>
    <name evidence="1" type="primary">caiE</name>
    <name type="ordered locus">ECIAI39_0036</name>
</gene>
<protein>
    <recommendedName>
        <fullName evidence="1">Carnitine operon protein CaiE</fullName>
    </recommendedName>
</protein>
<name>CAIE_ECO7I</name>
<proteinExistence type="inferred from homology"/>
<keyword id="KW-0677">Repeat</keyword>
<keyword id="KW-0808">Transferase</keyword>